<reference key="1">
    <citation type="journal article" date="2002" name="Proc. Natl. Acad. Sci. U.S.A.">
        <title>Genome sequence of the hyperthermophilic crenarchaeon Pyrobaculum aerophilum.</title>
        <authorList>
            <person name="Fitz-Gibbon S.T."/>
            <person name="Ladner H."/>
            <person name="Kim U.-J."/>
            <person name="Stetter K.O."/>
            <person name="Simon M.I."/>
            <person name="Miller J.H."/>
        </authorList>
    </citation>
    <scope>NUCLEOTIDE SEQUENCE [LARGE SCALE GENOMIC DNA]</scope>
    <source>
        <strain>ATCC 51768 / DSM 7523 / JCM 9630 / CIP 104966 / NBRC 100827 / IM2</strain>
    </source>
</reference>
<gene>
    <name evidence="1" type="primary">rpl10</name>
    <name evidence="1" type="synonym">rplP0</name>
    <name type="ordered locus">PAE3107</name>
</gene>
<comment type="function">
    <text evidence="1">Forms part of the ribosomal stalk, playing a central role in the interaction of the ribosome with GTP-bound translation factors.</text>
</comment>
<comment type="subunit">
    <text evidence="1">Part of the 50S ribosomal subunit. Forms part of the ribosomal stalk which helps the ribosome interact with GTP-bound translation factors. Forms a heptameric L10(L12)2(L12)2(L12)2 complex, where L10 forms an elongated spine to which the L12 dimers bind in a sequential fashion.</text>
</comment>
<comment type="similarity">
    <text evidence="1">Belongs to the universal ribosomal protein uL10 family.</text>
</comment>
<evidence type="ECO:0000255" key="1">
    <source>
        <dbReference type="HAMAP-Rule" id="MF_00280"/>
    </source>
</evidence>
<evidence type="ECO:0000256" key="2">
    <source>
        <dbReference type="SAM" id="MobiDB-lite"/>
    </source>
</evidence>
<evidence type="ECO:0000305" key="3"/>
<name>RL10_PYRAE</name>
<sequence>MMLAIGKRRYVRTRQYPARKVKIVSEATELLQKYPYVFLFDLHGLSSRILHEYRYRLRRYGVIKIIKPTLFKIAFTKVYGGIPAEIAEKVRGEVGFFFTSFNPAEVIKIVAENSVRRAAQPGDKAPFDIVVPAGPTNASPGPIISKFGKLKIPTRVQEGKIWIAKDTVVAKAGQEITPEMAEVLRVVGIEPIFEQLRLLGVIWRGQRFVDISELIIDVNKYKELFETASVYARNLALNIVYPTREVLQAVIPAAHMRAVALAAKLGVVTRETLPALLSRAVAEANALAAVVAAKAPDLGISVSLPQTAAPQQTPQPTEAPKEEAQEEKKEGPSEEEIAGSLASLF</sequence>
<keyword id="KW-1185">Reference proteome</keyword>
<keyword id="KW-0687">Ribonucleoprotein</keyword>
<keyword id="KW-0689">Ribosomal protein</keyword>
<keyword id="KW-0694">RNA-binding</keyword>
<keyword id="KW-0699">rRNA-binding</keyword>
<proteinExistence type="inferred from homology"/>
<feature type="chain" id="PRO_0000154802" description="Large ribosomal subunit protein uL10">
    <location>
        <begin position="1"/>
        <end position="345"/>
    </location>
</feature>
<feature type="region of interest" description="Disordered" evidence="2">
    <location>
        <begin position="303"/>
        <end position="345"/>
    </location>
</feature>
<feature type="compositionally biased region" description="Low complexity" evidence="2">
    <location>
        <begin position="305"/>
        <end position="318"/>
    </location>
</feature>
<feature type="compositionally biased region" description="Basic and acidic residues" evidence="2">
    <location>
        <begin position="319"/>
        <end position="332"/>
    </location>
</feature>
<protein>
    <recommendedName>
        <fullName evidence="1">Large ribosomal subunit protein uL10</fullName>
    </recommendedName>
    <alternativeName>
        <fullName evidence="3">50S ribosomal protein L10</fullName>
    </alternativeName>
    <alternativeName>
        <fullName evidence="1">Acidic ribosomal protein P0 homolog</fullName>
    </alternativeName>
</protein>
<dbReference type="EMBL" id="AE009441">
    <property type="protein sequence ID" value="AAL64676.1"/>
    <property type="molecule type" value="Genomic_DNA"/>
</dbReference>
<dbReference type="SMR" id="Q8ZTT3"/>
<dbReference type="FunCoup" id="Q8ZTT3">
    <property type="interactions" value="182"/>
</dbReference>
<dbReference type="STRING" id="178306.PAE3107"/>
<dbReference type="EnsemblBacteria" id="AAL64676">
    <property type="protein sequence ID" value="AAL64676"/>
    <property type="gene ID" value="PAE3107"/>
</dbReference>
<dbReference type="KEGG" id="pai:PAE3107"/>
<dbReference type="PATRIC" id="fig|178306.9.peg.2335"/>
<dbReference type="eggNOG" id="arCOG04288">
    <property type="taxonomic scope" value="Archaea"/>
</dbReference>
<dbReference type="HOGENOM" id="CLU_053173_0_0_2"/>
<dbReference type="InParanoid" id="Q8ZTT3"/>
<dbReference type="Proteomes" id="UP000002439">
    <property type="component" value="Chromosome"/>
</dbReference>
<dbReference type="GO" id="GO:0022625">
    <property type="term" value="C:cytosolic large ribosomal subunit"/>
    <property type="evidence" value="ECO:0000318"/>
    <property type="project" value="GO_Central"/>
</dbReference>
<dbReference type="GO" id="GO:0070180">
    <property type="term" value="F:large ribosomal subunit rRNA binding"/>
    <property type="evidence" value="ECO:0000318"/>
    <property type="project" value="GO_Central"/>
</dbReference>
<dbReference type="GO" id="GO:0003735">
    <property type="term" value="F:structural constituent of ribosome"/>
    <property type="evidence" value="ECO:0000318"/>
    <property type="project" value="GO_Central"/>
</dbReference>
<dbReference type="GO" id="GO:0002181">
    <property type="term" value="P:cytoplasmic translation"/>
    <property type="evidence" value="ECO:0000318"/>
    <property type="project" value="GO_Central"/>
</dbReference>
<dbReference type="CDD" id="cd05795">
    <property type="entry name" value="Ribosomal_P0_L10e"/>
    <property type="match status" value="1"/>
</dbReference>
<dbReference type="FunFam" id="3.90.105.20:FF:000001">
    <property type="entry name" value="60S acidic ribosomal protein P0"/>
    <property type="match status" value="1"/>
</dbReference>
<dbReference type="Gene3D" id="3.30.70.1730">
    <property type="match status" value="1"/>
</dbReference>
<dbReference type="Gene3D" id="3.90.105.20">
    <property type="match status" value="1"/>
</dbReference>
<dbReference type="Gene3D" id="6.10.140.760">
    <property type="match status" value="1"/>
</dbReference>
<dbReference type="HAMAP" id="MF_00280">
    <property type="entry name" value="Ribosomal_uL10_arch"/>
    <property type="match status" value="1"/>
</dbReference>
<dbReference type="InterPro" id="IPR050323">
    <property type="entry name" value="Ribosomal_protein_uL10"/>
</dbReference>
<dbReference type="InterPro" id="IPR001790">
    <property type="entry name" value="Ribosomal_uL10"/>
</dbReference>
<dbReference type="InterPro" id="IPR040637">
    <property type="entry name" value="Ribosomal_uL10-like_insert"/>
</dbReference>
<dbReference type="InterPro" id="IPR043164">
    <property type="entry name" value="Ribosomal_uL10-like_insert_sf"/>
</dbReference>
<dbReference type="InterPro" id="IPR043141">
    <property type="entry name" value="Ribosomal_uL10-like_sf"/>
</dbReference>
<dbReference type="InterPro" id="IPR022909">
    <property type="entry name" value="Ribosomal_uL10_arc"/>
</dbReference>
<dbReference type="PANTHER" id="PTHR45699">
    <property type="entry name" value="60S ACIDIC RIBOSOMAL PROTEIN P0"/>
    <property type="match status" value="1"/>
</dbReference>
<dbReference type="PANTHER" id="PTHR45699:SF3">
    <property type="entry name" value="LARGE RIBOSOMAL SUBUNIT PROTEIN UL10"/>
    <property type="match status" value="1"/>
</dbReference>
<dbReference type="Pfam" id="PF00466">
    <property type="entry name" value="Ribosomal_L10"/>
    <property type="match status" value="1"/>
</dbReference>
<dbReference type="Pfam" id="PF17777">
    <property type="entry name" value="RL10P_insert"/>
    <property type="match status" value="1"/>
</dbReference>
<dbReference type="SUPFAM" id="SSF160369">
    <property type="entry name" value="Ribosomal protein L10-like"/>
    <property type="match status" value="1"/>
</dbReference>
<organism>
    <name type="scientific">Pyrobaculum aerophilum (strain ATCC 51768 / DSM 7523 / JCM 9630 / CIP 104966 / NBRC 100827 / IM2)</name>
    <dbReference type="NCBI Taxonomy" id="178306"/>
    <lineage>
        <taxon>Archaea</taxon>
        <taxon>Thermoproteota</taxon>
        <taxon>Thermoprotei</taxon>
        <taxon>Thermoproteales</taxon>
        <taxon>Thermoproteaceae</taxon>
        <taxon>Pyrobaculum</taxon>
    </lineage>
</organism>
<accession>Q8ZTT3</accession>